<name>METH_DICDI</name>
<protein>
    <recommendedName>
        <fullName>Methionine synthase</fullName>
        <ecNumber>2.1.1.13</ecNumber>
    </recommendedName>
    <alternativeName>
        <fullName>5-methyltetrahydrofolate--homocysteine methyltransferase</fullName>
    </alternativeName>
    <alternativeName>
        <fullName>Vitamin-B12 dependent methionine synthase</fullName>
        <shortName>MS</shortName>
    </alternativeName>
</protein>
<proteinExistence type="inferred from homology"/>
<organism>
    <name type="scientific">Dictyostelium discoideum</name>
    <name type="common">Social amoeba</name>
    <dbReference type="NCBI Taxonomy" id="44689"/>
    <lineage>
        <taxon>Eukaryota</taxon>
        <taxon>Amoebozoa</taxon>
        <taxon>Evosea</taxon>
        <taxon>Eumycetozoa</taxon>
        <taxon>Dictyostelia</taxon>
        <taxon>Dictyosteliales</taxon>
        <taxon>Dictyosteliaceae</taxon>
        <taxon>Dictyostelium</taxon>
    </lineage>
</organism>
<accession>Q54P92</accession>
<feature type="chain" id="PRO_0000327799" description="Methionine synthase">
    <location>
        <begin position="1"/>
        <end position="1260"/>
    </location>
</feature>
<feature type="domain" description="Hcy-binding" evidence="3">
    <location>
        <begin position="13"/>
        <end position="333"/>
    </location>
</feature>
<feature type="domain" description="Pterin-binding" evidence="4">
    <location>
        <begin position="364"/>
        <end position="625"/>
    </location>
</feature>
<feature type="domain" description="B12-binding N-terminal" evidence="7">
    <location>
        <begin position="655"/>
        <end position="749"/>
    </location>
</feature>
<feature type="domain" description="B12-binding" evidence="6">
    <location>
        <begin position="766"/>
        <end position="883"/>
    </location>
</feature>
<feature type="domain" description="AdoMet activation" evidence="5">
    <location>
        <begin position="916"/>
        <end position="1256"/>
    </location>
</feature>
<feature type="binding site" evidence="3">
    <location>
        <position position="255"/>
    </location>
    <ligand>
        <name>Zn(2+)</name>
        <dbReference type="ChEBI" id="CHEBI:29105"/>
    </ligand>
</feature>
<feature type="binding site" evidence="3">
    <location>
        <position position="318"/>
    </location>
    <ligand>
        <name>Zn(2+)</name>
        <dbReference type="ChEBI" id="CHEBI:29105"/>
    </ligand>
</feature>
<feature type="binding site" evidence="3">
    <location>
        <position position="319"/>
    </location>
    <ligand>
        <name>Zn(2+)</name>
        <dbReference type="ChEBI" id="CHEBI:29105"/>
    </ligand>
</feature>
<feature type="binding site" evidence="2">
    <location>
        <position position="699"/>
    </location>
    <ligand>
        <name>methylcob(III)alamin</name>
        <dbReference type="ChEBI" id="CHEBI:28115"/>
    </ligand>
</feature>
<feature type="binding site" evidence="2">
    <location>
        <begin position="775"/>
        <end position="779"/>
    </location>
    <ligand>
        <name>methylcob(III)alamin</name>
        <dbReference type="ChEBI" id="CHEBI:28115"/>
    </ligand>
</feature>
<feature type="binding site" description="axial binding residue" evidence="2">
    <location>
        <position position="778"/>
    </location>
    <ligand>
        <name>methylcob(III)alamin</name>
        <dbReference type="ChEBI" id="CHEBI:28115"/>
    </ligand>
    <ligandPart>
        <name>Co</name>
        <dbReference type="ChEBI" id="CHEBI:27638"/>
    </ligandPart>
</feature>
<feature type="binding site" evidence="2">
    <location>
        <position position="823"/>
    </location>
    <ligand>
        <name>methylcob(III)alamin</name>
        <dbReference type="ChEBI" id="CHEBI:28115"/>
    </ligand>
</feature>
<feature type="binding site" evidence="2">
    <location>
        <position position="827"/>
    </location>
    <ligand>
        <name>methylcob(III)alamin</name>
        <dbReference type="ChEBI" id="CHEBI:28115"/>
    </ligand>
</feature>
<feature type="binding site" evidence="2">
    <location>
        <position position="879"/>
    </location>
    <ligand>
        <name>methylcob(III)alamin</name>
        <dbReference type="ChEBI" id="CHEBI:28115"/>
    </ligand>
</feature>
<feature type="binding site" evidence="1">
    <location>
        <position position="966"/>
    </location>
    <ligand>
        <name>S-adenosyl-L-methionine</name>
        <dbReference type="ChEBI" id="CHEBI:59789"/>
    </ligand>
</feature>
<feature type="binding site" evidence="1">
    <location>
        <position position="1163"/>
    </location>
    <ligand>
        <name>S-adenosyl-L-methionine</name>
        <dbReference type="ChEBI" id="CHEBI:59789"/>
    </ligand>
</feature>
<feature type="binding site" evidence="1">
    <location>
        <begin position="1218"/>
        <end position="1219"/>
    </location>
    <ligand>
        <name>S-adenosyl-L-methionine</name>
        <dbReference type="ChEBI" id="CHEBI:59789"/>
    </ligand>
</feature>
<keyword id="KW-0028">Amino-acid biosynthesis</keyword>
<keyword id="KW-0846">Cobalamin</keyword>
<keyword id="KW-0170">Cobalt</keyword>
<keyword id="KW-0479">Metal-binding</keyword>
<keyword id="KW-0486">Methionine biosynthesis</keyword>
<keyword id="KW-0489">Methyltransferase</keyword>
<keyword id="KW-1185">Reference proteome</keyword>
<keyword id="KW-0677">Repeat</keyword>
<keyword id="KW-0949">S-adenosyl-L-methionine</keyword>
<keyword id="KW-0808">Transferase</keyword>
<keyword id="KW-0862">Zinc</keyword>
<comment type="function">
    <text evidence="1">Catalyzes the transfer of a methyl group from methyl-cobalamin to homocysteine, yielding enzyme-bound cob(I)alamin and methionine. Subsequently, remethylates the cofactor using methyltetrahydrofolate (By similarity).</text>
</comment>
<comment type="catalytic activity">
    <reaction>
        <text>(6S)-5-methyl-5,6,7,8-tetrahydrofolate + L-homocysteine = (6S)-5,6,7,8-tetrahydrofolate + L-methionine</text>
        <dbReference type="Rhea" id="RHEA:11172"/>
        <dbReference type="ChEBI" id="CHEBI:18608"/>
        <dbReference type="ChEBI" id="CHEBI:57453"/>
        <dbReference type="ChEBI" id="CHEBI:57844"/>
        <dbReference type="ChEBI" id="CHEBI:58199"/>
        <dbReference type="EC" id="2.1.1.13"/>
    </reaction>
</comment>
<comment type="cofactor">
    <cofactor evidence="1">
        <name>methylcob(III)alamin</name>
        <dbReference type="ChEBI" id="CHEBI:28115"/>
    </cofactor>
</comment>
<comment type="cofactor">
    <cofactor evidence="1">
        <name>Zn(2+)</name>
        <dbReference type="ChEBI" id="CHEBI:29105"/>
    </cofactor>
    <text evidence="1">Binds 1 zinc ion per subunit.</text>
</comment>
<comment type="pathway">
    <text>Amino-acid biosynthesis; L-methionine biosynthesis via de novo pathway; L-methionine from L-homocysteine (MetH route): step 1/1.</text>
</comment>
<comment type="domain">
    <text evidence="1">Modular enzyme with four functionally distinct domains. The isolated Hcy-binding domain catalyzes methyl transfer from free methylcobalamin to homocysteine. The Hcy-binding domain in association with the pterin-binding domain catalyzes the methylation of cob(I)alamin by methyltetrahydrofolate and the methylation of homocysteine. The B12-binding domain binds the cofactor. The AdoMet activation domain binds S-adenosyl-L-methionine. Under aerobic conditions cob(I)alamin can be converted to inactive cob(II)alamin. Reductive methylation by S-adenosyl-L-methionine and flavodoxin regenerates methylcobalamin (By similarity).</text>
</comment>
<comment type="miscellaneous">
    <text evidence="1">L-homocysteine is bound via the zinc atom.</text>
</comment>
<comment type="similarity">
    <text evidence="8">Belongs to the vitamin-B12 dependent methionine synthase family.</text>
</comment>
<evidence type="ECO:0000250" key="1"/>
<evidence type="ECO:0000250" key="2">
    <source>
        <dbReference type="UniProtKB" id="P13009"/>
    </source>
</evidence>
<evidence type="ECO:0000255" key="3">
    <source>
        <dbReference type="PROSITE-ProRule" id="PRU00333"/>
    </source>
</evidence>
<evidence type="ECO:0000255" key="4">
    <source>
        <dbReference type="PROSITE-ProRule" id="PRU00334"/>
    </source>
</evidence>
<evidence type="ECO:0000255" key="5">
    <source>
        <dbReference type="PROSITE-ProRule" id="PRU00346"/>
    </source>
</evidence>
<evidence type="ECO:0000255" key="6">
    <source>
        <dbReference type="PROSITE-ProRule" id="PRU00666"/>
    </source>
</evidence>
<evidence type="ECO:0000255" key="7">
    <source>
        <dbReference type="PROSITE-ProRule" id="PRU00667"/>
    </source>
</evidence>
<evidence type="ECO:0000305" key="8"/>
<sequence>MINSNDKNESDTFGIIRKILSERIMVLDGAMGTEIQKFKLKDNDYRGEEFKDFPHELGGNNDLLSLTQPHIIREIHCKYLEAGADFIETNTFNGNIFSQADYKMEHLVKRINIESARLAKSACEEYTKKDPSRPRFVCGAVGPTNKTASISPSVERPEARNVLFDELVSGYLEQVEALVEGGIDVILVETVFDSLNCKAALFAIEEFFKTYSPRLPVFVSGTIVDKSGRTLSGQTGEAFYTSVASANLMVFGLNCALGAQEMRPFLQNISKCSECYVSCYPNAGLPNTFGGYDETPEMMAEQIKEFAESGLLNIVGGCCGTSPDHIRAFCNAIEGIAPRAIPTLVPNTTLSGLEPLVFTKELNFVNVGERCNVSGSRRFANLIKANKYEEALSVARQQVEAGAQIIDINMDEGMIDAVAAIQKFLFFIGSEPEISKVPIMLDSSNFDVVEAGLKCVQGKCIVNSISLKVGEELFIKQAKIVKQYGASVVVMAFDENGQATSKEEKVRICYRSYKILTEQVGFYPQDIIFDPNILTIATGLEEHNNYGVEFIEATREIKALMPLTRVSGGVSNLSFSFRGNEPLREAMHSAFLYYAIAAGMDMGIVNAGALPIYDDIPKDLLKLVEDAILNRTNDATEKLLEYAQANNKSEKANVEVEEWRNKPVSERIAHALVKGITTYIIEDTEEARNTLPSSLSVIEGPLMGGMNVVGDLFGAGKMFLPQVIKSARVMKKAVAHLIPFMEEEKRLKRLEKGNDEAAEDEPDNAGVVVLATVKGDVHDIGKNIVGVVLGCNNYKVIDIGVMTPCEKIVEAIIANKADVVGLSGLITPSLDEMIYVASELERLKFKIPLMIGGATTSQIHTAVKISPHYSQPTVHVLDASRSVTVVQSLLDPNNKEVFAEDVSQQYAELREKHYASLKDRKYTSLEKARQHCVKVNWKTIQPVKPTFLGTQVFKEYSLEKLVTKIDWNPFFVTWQLRGKYPNRGYPRIFNDETVGAEAKKLFDDAQTMLKEIVDKKLLNARGVIGFYPANSIDEDIIIYDHNDDETRSKPIATLFGLRQQNEKETDEPYIAIGDYIAPVSSGVKDYIGLFAVSSGFGLEDMVEKYKKENDDYSSIMAKALADRLAEALAEAVHEDVRREHWAYEKDQALSNEDLFKIKYKGIRPAPGYPAQPDHTEMKTIWSLMNVNENTSIELTDHMAMLPGAAVCGVYFSHEHAKYFSVGKITKEQIESYASRKQITKEEAERWLSSILSYDRLPLVK</sequence>
<gene>
    <name type="primary">mtr</name>
    <name type="ORF">DDB_G0284699</name>
</gene>
<reference key="1">
    <citation type="journal article" date="2005" name="Nature">
        <title>The genome of the social amoeba Dictyostelium discoideum.</title>
        <authorList>
            <person name="Eichinger L."/>
            <person name="Pachebat J.A."/>
            <person name="Gloeckner G."/>
            <person name="Rajandream M.A."/>
            <person name="Sucgang R."/>
            <person name="Berriman M."/>
            <person name="Song J."/>
            <person name="Olsen R."/>
            <person name="Szafranski K."/>
            <person name="Xu Q."/>
            <person name="Tunggal B."/>
            <person name="Kummerfeld S."/>
            <person name="Madera M."/>
            <person name="Konfortov B.A."/>
            <person name="Rivero F."/>
            <person name="Bankier A.T."/>
            <person name="Lehmann R."/>
            <person name="Hamlin N."/>
            <person name="Davies R."/>
            <person name="Gaudet P."/>
            <person name="Fey P."/>
            <person name="Pilcher K."/>
            <person name="Chen G."/>
            <person name="Saunders D."/>
            <person name="Sodergren E.J."/>
            <person name="Davis P."/>
            <person name="Kerhornou A."/>
            <person name="Nie X."/>
            <person name="Hall N."/>
            <person name="Anjard C."/>
            <person name="Hemphill L."/>
            <person name="Bason N."/>
            <person name="Farbrother P."/>
            <person name="Desany B."/>
            <person name="Just E."/>
            <person name="Morio T."/>
            <person name="Rost R."/>
            <person name="Churcher C.M."/>
            <person name="Cooper J."/>
            <person name="Haydock S."/>
            <person name="van Driessche N."/>
            <person name="Cronin A."/>
            <person name="Goodhead I."/>
            <person name="Muzny D.M."/>
            <person name="Mourier T."/>
            <person name="Pain A."/>
            <person name="Lu M."/>
            <person name="Harper D."/>
            <person name="Lindsay R."/>
            <person name="Hauser H."/>
            <person name="James K.D."/>
            <person name="Quiles M."/>
            <person name="Madan Babu M."/>
            <person name="Saito T."/>
            <person name="Buchrieser C."/>
            <person name="Wardroper A."/>
            <person name="Felder M."/>
            <person name="Thangavelu M."/>
            <person name="Johnson D."/>
            <person name="Knights A."/>
            <person name="Loulseged H."/>
            <person name="Mungall K.L."/>
            <person name="Oliver K."/>
            <person name="Price C."/>
            <person name="Quail M.A."/>
            <person name="Urushihara H."/>
            <person name="Hernandez J."/>
            <person name="Rabbinowitsch E."/>
            <person name="Steffen D."/>
            <person name="Sanders M."/>
            <person name="Ma J."/>
            <person name="Kohara Y."/>
            <person name="Sharp S."/>
            <person name="Simmonds M.N."/>
            <person name="Spiegler S."/>
            <person name="Tivey A."/>
            <person name="Sugano S."/>
            <person name="White B."/>
            <person name="Walker D."/>
            <person name="Woodward J.R."/>
            <person name="Winckler T."/>
            <person name="Tanaka Y."/>
            <person name="Shaulsky G."/>
            <person name="Schleicher M."/>
            <person name="Weinstock G.M."/>
            <person name="Rosenthal A."/>
            <person name="Cox E.C."/>
            <person name="Chisholm R.L."/>
            <person name="Gibbs R.A."/>
            <person name="Loomis W.F."/>
            <person name="Platzer M."/>
            <person name="Kay R.R."/>
            <person name="Williams J.G."/>
            <person name="Dear P.H."/>
            <person name="Noegel A.A."/>
            <person name="Barrell B.G."/>
            <person name="Kuspa A."/>
        </authorList>
    </citation>
    <scope>NUCLEOTIDE SEQUENCE [LARGE SCALE GENOMIC DNA]</scope>
    <source>
        <strain>AX4</strain>
    </source>
</reference>
<dbReference type="EC" id="2.1.1.13"/>
<dbReference type="EMBL" id="AAFI02000070">
    <property type="protein sequence ID" value="EAL65119.1"/>
    <property type="molecule type" value="Genomic_DNA"/>
</dbReference>
<dbReference type="RefSeq" id="XP_638483.1">
    <property type="nucleotide sequence ID" value="XM_633391.1"/>
</dbReference>
<dbReference type="SMR" id="Q54P92"/>
<dbReference type="FunCoup" id="Q54P92">
    <property type="interactions" value="74"/>
</dbReference>
<dbReference type="STRING" id="44689.Q54P92"/>
<dbReference type="PaxDb" id="44689-DDB0230138"/>
<dbReference type="EnsemblProtists" id="EAL65119">
    <property type="protein sequence ID" value="EAL65119"/>
    <property type="gene ID" value="DDB_G0284699"/>
</dbReference>
<dbReference type="GeneID" id="8624734"/>
<dbReference type="KEGG" id="ddi:DDB_G0284699"/>
<dbReference type="dictyBase" id="DDB_G0284699">
    <property type="gene designation" value="mtr"/>
</dbReference>
<dbReference type="VEuPathDB" id="AmoebaDB:DDB_G0284699"/>
<dbReference type="eggNOG" id="KOG1579">
    <property type="taxonomic scope" value="Eukaryota"/>
</dbReference>
<dbReference type="HOGENOM" id="CLU_004914_2_0_1"/>
<dbReference type="InParanoid" id="Q54P92"/>
<dbReference type="OMA" id="ADCIAMS"/>
<dbReference type="PhylomeDB" id="Q54P92"/>
<dbReference type="Reactome" id="R-DDI-156581">
    <property type="pathway name" value="Methylation"/>
</dbReference>
<dbReference type="Reactome" id="R-DDI-1614635">
    <property type="pathway name" value="Sulfur amino acid metabolism"/>
</dbReference>
<dbReference type="Reactome" id="R-DDI-9013407">
    <property type="pathway name" value="RHOH GTPase cycle"/>
</dbReference>
<dbReference type="Reactome" id="R-DDI-9759218">
    <property type="pathway name" value="Cobalamin (Cbl) metabolism"/>
</dbReference>
<dbReference type="UniPathway" id="UPA00051">
    <property type="reaction ID" value="UER00081"/>
</dbReference>
<dbReference type="PRO" id="PR:Q54P92"/>
<dbReference type="Proteomes" id="UP000002195">
    <property type="component" value="Chromosome 4"/>
</dbReference>
<dbReference type="GO" id="GO:0005829">
    <property type="term" value="C:cytosol"/>
    <property type="evidence" value="ECO:0000318"/>
    <property type="project" value="GO_Central"/>
</dbReference>
<dbReference type="GO" id="GO:0031419">
    <property type="term" value="F:cobalamin binding"/>
    <property type="evidence" value="ECO:0007669"/>
    <property type="project" value="UniProtKB-KW"/>
</dbReference>
<dbReference type="GO" id="GO:0008705">
    <property type="term" value="F:methionine synthase activity"/>
    <property type="evidence" value="ECO:0000250"/>
    <property type="project" value="UniProtKB"/>
</dbReference>
<dbReference type="GO" id="GO:0008270">
    <property type="term" value="F:zinc ion binding"/>
    <property type="evidence" value="ECO:0007669"/>
    <property type="project" value="InterPro"/>
</dbReference>
<dbReference type="GO" id="GO:0050667">
    <property type="term" value="P:homocysteine metabolic process"/>
    <property type="evidence" value="ECO:0000318"/>
    <property type="project" value="GO_Central"/>
</dbReference>
<dbReference type="GO" id="GO:0009086">
    <property type="term" value="P:methionine biosynthetic process"/>
    <property type="evidence" value="ECO:0000250"/>
    <property type="project" value="UniProtKB"/>
</dbReference>
<dbReference type="GO" id="GO:0032259">
    <property type="term" value="P:methylation"/>
    <property type="evidence" value="ECO:0007669"/>
    <property type="project" value="UniProtKB-KW"/>
</dbReference>
<dbReference type="GO" id="GO:0046653">
    <property type="term" value="P:tetrahydrofolate metabolic process"/>
    <property type="evidence" value="ECO:0000318"/>
    <property type="project" value="GO_Central"/>
</dbReference>
<dbReference type="CDD" id="cd02069">
    <property type="entry name" value="methionine_synthase_B12_BD"/>
    <property type="match status" value="1"/>
</dbReference>
<dbReference type="CDD" id="cd00740">
    <property type="entry name" value="MeTr"/>
    <property type="match status" value="1"/>
</dbReference>
<dbReference type="FunFam" id="1.10.1240.10:FF:000001">
    <property type="entry name" value="Methionine synthase"/>
    <property type="match status" value="1"/>
</dbReference>
<dbReference type="FunFam" id="3.20.20.20:FF:000002">
    <property type="entry name" value="Methionine synthase"/>
    <property type="match status" value="1"/>
</dbReference>
<dbReference type="FunFam" id="3.20.20.330:FF:000001">
    <property type="entry name" value="Methionine synthase"/>
    <property type="match status" value="1"/>
</dbReference>
<dbReference type="FunFam" id="3.40.50.280:FF:000001">
    <property type="entry name" value="Methionine synthase"/>
    <property type="match status" value="1"/>
</dbReference>
<dbReference type="Gene3D" id="3.40.50.280">
    <property type="entry name" value="Cobalamin-binding domain"/>
    <property type="match status" value="1"/>
</dbReference>
<dbReference type="Gene3D" id="1.10.288.10">
    <property type="entry name" value="Cobalamin-dependent Methionine Synthase, domain 2"/>
    <property type="match status" value="1"/>
</dbReference>
<dbReference type="Gene3D" id="3.20.20.20">
    <property type="entry name" value="Dihydropteroate synthase-like"/>
    <property type="match status" value="1"/>
</dbReference>
<dbReference type="Gene3D" id="3.20.20.330">
    <property type="entry name" value="Homocysteine-binding-like domain"/>
    <property type="match status" value="1"/>
</dbReference>
<dbReference type="Gene3D" id="1.10.1240.10">
    <property type="entry name" value="Methionine synthase domain"/>
    <property type="match status" value="1"/>
</dbReference>
<dbReference type="Gene3D" id="3.10.196.10">
    <property type="entry name" value="Vitamin B12-dependent methionine synthase, activation domain"/>
    <property type="match status" value="1"/>
</dbReference>
<dbReference type="InterPro" id="IPR003759">
    <property type="entry name" value="Cbl-bd_cap"/>
</dbReference>
<dbReference type="InterPro" id="IPR006158">
    <property type="entry name" value="Cobalamin-bd"/>
</dbReference>
<dbReference type="InterPro" id="IPR036724">
    <property type="entry name" value="Cobalamin-bd_sf"/>
</dbReference>
<dbReference type="InterPro" id="IPR011005">
    <property type="entry name" value="Dihydropteroate_synth-like_sf"/>
</dbReference>
<dbReference type="InterPro" id="IPR003726">
    <property type="entry name" value="HCY_dom"/>
</dbReference>
<dbReference type="InterPro" id="IPR036589">
    <property type="entry name" value="HCY_dom_sf"/>
</dbReference>
<dbReference type="InterPro" id="IPR050554">
    <property type="entry name" value="Met_Synthase/Corrinoid"/>
</dbReference>
<dbReference type="InterPro" id="IPR033706">
    <property type="entry name" value="Met_synthase_B12-bd"/>
</dbReference>
<dbReference type="InterPro" id="IPR011822">
    <property type="entry name" value="MetH"/>
</dbReference>
<dbReference type="InterPro" id="IPR036594">
    <property type="entry name" value="Meth_synthase_dom"/>
</dbReference>
<dbReference type="InterPro" id="IPR000489">
    <property type="entry name" value="Pterin-binding_dom"/>
</dbReference>
<dbReference type="InterPro" id="IPR004223">
    <property type="entry name" value="VitB12-dep_Met_synth_activ_dom"/>
</dbReference>
<dbReference type="InterPro" id="IPR037010">
    <property type="entry name" value="VitB12-dep_Met_synth_activ_sf"/>
</dbReference>
<dbReference type="NCBIfam" id="TIGR02082">
    <property type="entry name" value="metH"/>
    <property type="match status" value="1"/>
</dbReference>
<dbReference type="NCBIfam" id="NF007024">
    <property type="entry name" value="PRK09490.1"/>
    <property type="match status" value="1"/>
</dbReference>
<dbReference type="PANTHER" id="PTHR45833">
    <property type="entry name" value="METHIONINE SYNTHASE"/>
    <property type="match status" value="1"/>
</dbReference>
<dbReference type="PANTHER" id="PTHR45833:SF1">
    <property type="entry name" value="METHIONINE SYNTHASE"/>
    <property type="match status" value="1"/>
</dbReference>
<dbReference type="Pfam" id="PF02310">
    <property type="entry name" value="B12-binding"/>
    <property type="match status" value="1"/>
</dbReference>
<dbReference type="Pfam" id="PF02607">
    <property type="entry name" value="B12-binding_2"/>
    <property type="match status" value="1"/>
</dbReference>
<dbReference type="Pfam" id="PF02965">
    <property type="entry name" value="Met_synt_B12"/>
    <property type="match status" value="1"/>
</dbReference>
<dbReference type="Pfam" id="PF00809">
    <property type="entry name" value="Pterin_bind"/>
    <property type="match status" value="1"/>
</dbReference>
<dbReference type="Pfam" id="PF02574">
    <property type="entry name" value="S-methyl_trans"/>
    <property type="match status" value="1"/>
</dbReference>
<dbReference type="PIRSF" id="PIRSF000381">
    <property type="entry name" value="MetH"/>
    <property type="match status" value="1"/>
</dbReference>
<dbReference type="SMART" id="SM01018">
    <property type="entry name" value="B12-binding_2"/>
    <property type="match status" value="1"/>
</dbReference>
<dbReference type="SUPFAM" id="SSF52242">
    <property type="entry name" value="Cobalamin (vitamin B12)-binding domain"/>
    <property type="match status" value="1"/>
</dbReference>
<dbReference type="SUPFAM" id="SSF51717">
    <property type="entry name" value="Dihydropteroate synthetase-like"/>
    <property type="match status" value="1"/>
</dbReference>
<dbReference type="SUPFAM" id="SSF82282">
    <property type="entry name" value="Homocysteine S-methyltransferase"/>
    <property type="match status" value="1"/>
</dbReference>
<dbReference type="SUPFAM" id="SSF56507">
    <property type="entry name" value="Methionine synthase activation domain-like"/>
    <property type="match status" value="1"/>
</dbReference>
<dbReference type="SUPFAM" id="SSF47644">
    <property type="entry name" value="Methionine synthase domain"/>
    <property type="match status" value="1"/>
</dbReference>
<dbReference type="PROSITE" id="PS50974">
    <property type="entry name" value="ADOMET_ACTIVATION"/>
    <property type="match status" value="1"/>
</dbReference>
<dbReference type="PROSITE" id="PS51332">
    <property type="entry name" value="B12_BINDING"/>
    <property type="match status" value="1"/>
</dbReference>
<dbReference type="PROSITE" id="PS51337">
    <property type="entry name" value="B12_BINDING_NTER"/>
    <property type="match status" value="1"/>
</dbReference>
<dbReference type="PROSITE" id="PS50970">
    <property type="entry name" value="HCY"/>
    <property type="match status" value="1"/>
</dbReference>
<dbReference type="PROSITE" id="PS50972">
    <property type="entry name" value="PTERIN_BINDING"/>
    <property type="match status" value="1"/>
</dbReference>